<accession>P53205</accession>
<dbReference type="EMBL" id="Z72795">
    <property type="protein sequence ID" value="CAA96994.1"/>
    <property type="molecule type" value="Genomic_DNA"/>
</dbReference>
<dbReference type="EMBL" id="AY693296">
    <property type="protein sequence ID" value="AAT93315.1"/>
    <property type="molecule type" value="Genomic_DNA"/>
</dbReference>
<dbReference type="PIR" id="S64302">
    <property type="entry name" value="S64302"/>
</dbReference>
<dbReference type="IntAct" id="P53205">
    <property type="interactions" value="1"/>
</dbReference>
<dbReference type="PaxDb" id="4932-YGR011W"/>
<dbReference type="EnsemblFungi" id="YGR011W_mRNA">
    <property type="protein sequence ID" value="YGR011W"/>
    <property type="gene ID" value="YGR011W"/>
</dbReference>
<dbReference type="AGR" id="SGD:S000003243"/>
<dbReference type="SGD" id="S000003243">
    <property type="gene designation" value="YGR011W"/>
</dbReference>
<dbReference type="HOGENOM" id="CLU_2199051_0_0_1"/>
<gene>
    <name type="ordered locus">YGR011W</name>
</gene>
<organism>
    <name type="scientific">Saccharomyces cerevisiae (strain ATCC 204508 / S288c)</name>
    <name type="common">Baker's yeast</name>
    <dbReference type="NCBI Taxonomy" id="559292"/>
    <lineage>
        <taxon>Eukaryota</taxon>
        <taxon>Fungi</taxon>
        <taxon>Dikarya</taxon>
        <taxon>Ascomycota</taxon>
        <taxon>Saccharomycotina</taxon>
        <taxon>Saccharomycetes</taxon>
        <taxon>Saccharomycetales</taxon>
        <taxon>Saccharomycetaceae</taxon>
        <taxon>Saccharomyces</taxon>
    </lineage>
</organism>
<feature type="chain" id="PRO_0000202780" description="Putative uncharacterized protein YGR011W">
    <location>
        <begin position="1"/>
        <end position="108"/>
    </location>
</feature>
<comment type="miscellaneous">
    <text evidence="1">Partially overlaps NMA2.</text>
</comment>
<comment type="caution">
    <text evidence="2">Product of a dubious gene prediction unlikely to encode a functional protein. Because of that it is not part of the S.cerevisiae S288c complete/reference proteome set.</text>
</comment>
<proteinExistence type="uncertain"/>
<name>YG16_YEAST</name>
<evidence type="ECO:0000305" key="1"/>
<evidence type="ECO:0000305" key="2">
    <source>
    </source>
</evidence>
<protein>
    <recommendedName>
        <fullName>Putative uncharacterized protein YGR011W</fullName>
    </recommendedName>
</protein>
<sequence length="108" mass="12409">MLGPSCFPMISCMNTEEISLLSNNLFTMIFPLRKCGFSSDVECQFNIFFQTLSSVTSKSIIYTLIKVNRSSRSWIAKSEFITTLILQQFKFTTFLFKVHRKKVPGCTI</sequence>
<reference key="1">
    <citation type="journal article" date="1997" name="Nature">
        <title>The nucleotide sequence of Saccharomyces cerevisiae chromosome VII.</title>
        <authorList>
            <person name="Tettelin H."/>
            <person name="Agostoni-Carbone M.L."/>
            <person name="Albermann K."/>
            <person name="Albers M."/>
            <person name="Arroyo J."/>
            <person name="Backes U."/>
            <person name="Barreiros T."/>
            <person name="Bertani I."/>
            <person name="Bjourson A.J."/>
            <person name="Brueckner M."/>
            <person name="Bruschi C.V."/>
            <person name="Carignani G."/>
            <person name="Castagnoli L."/>
            <person name="Cerdan E."/>
            <person name="Clemente M.L."/>
            <person name="Coblenz A."/>
            <person name="Coglievina M."/>
            <person name="Coissac E."/>
            <person name="Defoor E."/>
            <person name="Del Bino S."/>
            <person name="Delius H."/>
            <person name="Delneri D."/>
            <person name="de Wergifosse P."/>
            <person name="Dujon B."/>
            <person name="Durand P."/>
            <person name="Entian K.-D."/>
            <person name="Eraso P."/>
            <person name="Escribano V."/>
            <person name="Fabiani L."/>
            <person name="Fartmann B."/>
            <person name="Feroli F."/>
            <person name="Feuermann M."/>
            <person name="Frontali L."/>
            <person name="Garcia-Gonzalez M."/>
            <person name="Garcia-Saez M.I."/>
            <person name="Goffeau A."/>
            <person name="Guerreiro P."/>
            <person name="Hani J."/>
            <person name="Hansen M."/>
            <person name="Hebling U."/>
            <person name="Hernandez K."/>
            <person name="Heumann K."/>
            <person name="Hilger F."/>
            <person name="Hofmann B."/>
            <person name="Indge K.J."/>
            <person name="James C.M."/>
            <person name="Klima R."/>
            <person name="Koetter P."/>
            <person name="Kramer B."/>
            <person name="Kramer W."/>
            <person name="Lauquin G."/>
            <person name="Leuther H."/>
            <person name="Louis E.J."/>
            <person name="Maillier E."/>
            <person name="Marconi A."/>
            <person name="Martegani E."/>
            <person name="Mazon M.J."/>
            <person name="Mazzoni C."/>
            <person name="McReynolds A.D.K."/>
            <person name="Melchioretto P."/>
            <person name="Mewes H.-W."/>
            <person name="Minenkova O."/>
            <person name="Mueller-Auer S."/>
            <person name="Nawrocki A."/>
            <person name="Netter P."/>
            <person name="Neu R."/>
            <person name="Nombela C."/>
            <person name="Oliver S.G."/>
            <person name="Panzeri L."/>
            <person name="Paoluzi S."/>
            <person name="Plevani P."/>
            <person name="Portetelle D."/>
            <person name="Portillo F."/>
            <person name="Potier S."/>
            <person name="Purnelle B."/>
            <person name="Rieger M."/>
            <person name="Riles L."/>
            <person name="Rinaldi T."/>
            <person name="Robben J."/>
            <person name="Rodrigues-Pousada C."/>
            <person name="Rodriguez-Belmonte E."/>
            <person name="Rodriguez-Torres A.M."/>
            <person name="Rose M."/>
            <person name="Ruzzi M."/>
            <person name="Saliola M."/>
            <person name="Sanchez-Perez M."/>
            <person name="Schaefer B."/>
            <person name="Schaefer M."/>
            <person name="Scharfe M."/>
            <person name="Schmidheini T."/>
            <person name="Schreer A."/>
            <person name="Skala J."/>
            <person name="Souciet J.-L."/>
            <person name="Steensma H.Y."/>
            <person name="Talla E."/>
            <person name="Thierry A."/>
            <person name="Vandenbol M."/>
            <person name="van der Aart Q.J.M."/>
            <person name="Van Dyck L."/>
            <person name="Vanoni M."/>
            <person name="Verhasselt P."/>
            <person name="Voet M."/>
            <person name="Volckaert G."/>
            <person name="Wambutt R."/>
            <person name="Watson M.D."/>
            <person name="Weber N."/>
            <person name="Wedler E."/>
            <person name="Wedler H."/>
            <person name="Wipfli P."/>
            <person name="Wolf K."/>
            <person name="Wright L.F."/>
            <person name="Zaccaria P."/>
            <person name="Zimmermann M."/>
            <person name="Zollner A."/>
            <person name="Kleine K."/>
        </authorList>
    </citation>
    <scope>NUCLEOTIDE SEQUENCE [LARGE SCALE GENOMIC DNA]</scope>
    <source>
        <strain>ATCC 204508 / S288c</strain>
    </source>
</reference>
<reference key="2">
    <citation type="journal article" date="2014" name="G3 (Bethesda)">
        <title>The reference genome sequence of Saccharomyces cerevisiae: Then and now.</title>
        <authorList>
            <person name="Engel S.R."/>
            <person name="Dietrich F.S."/>
            <person name="Fisk D.G."/>
            <person name="Binkley G."/>
            <person name="Balakrishnan R."/>
            <person name="Costanzo M.C."/>
            <person name="Dwight S.S."/>
            <person name="Hitz B.C."/>
            <person name="Karra K."/>
            <person name="Nash R.S."/>
            <person name="Weng S."/>
            <person name="Wong E.D."/>
            <person name="Lloyd P."/>
            <person name="Skrzypek M.S."/>
            <person name="Miyasato S.R."/>
            <person name="Simison M."/>
            <person name="Cherry J.M."/>
        </authorList>
    </citation>
    <scope>GENOME REANNOTATION</scope>
    <source>
        <strain>ATCC 204508 / S288c</strain>
    </source>
</reference>
<reference key="3">
    <citation type="journal article" date="2007" name="Genome Res.">
        <title>Approaching a complete repository of sequence-verified protein-encoding clones for Saccharomyces cerevisiae.</title>
        <authorList>
            <person name="Hu Y."/>
            <person name="Rolfs A."/>
            <person name="Bhullar B."/>
            <person name="Murthy T.V.S."/>
            <person name="Zhu C."/>
            <person name="Berger M.F."/>
            <person name="Camargo A.A."/>
            <person name="Kelley F."/>
            <person name="McCarron S."/>
            <person name="Jepson D."/>
            <person name="Richardson A."/>
            <person name="Raphael J."/>
            <person name="Moreira D."/>
            <person name="Taycher E."/>
            <person name="Zuo D."/>
            <person name="Mohr S."/>
            <person name="Kane M.F."/>
            <person name="Williamson J."/>
            <person name="Simpson A.J.G."/>
            <person name="Bulyk M.L."/>
            <person name="Harlow E."/>
            <person name="Marsischky G."/>
            <person name="Kolodner R.D."/>
            <person name="LaBaer J."/>
        </authorList>
    </citation>
    <scope>NUCLEOTIDE SEQUENCE [GENOMIC DNA]</scope>
    <source>
        <strain>ATCC 204508 / S288c</strain>
    </source>
</reference>